<keyword id="KW-0066">ATP synthesis</keyword>
<keyword id="KW-0067">ATP-binding</keyword>
<keyword id="KW-0139">CF(1)</keyword>
<keyword id="KW-0150">Chloroplast</keyword>
<keyword id="KW-0375">Hydrogen ion transport</keyword>
<keyword id="KW-0406">Ion transport</keyword>
<keyword id="KW-0472">Membrane</keyword>
<keyword id="KW-0547">Nucleotide-binding</keyword>
<keyword id="KW-0934">Plastid</keyword>
<keyword id="KW-0793">Thylakoid</keyword>
<keyword id="KW-1278">Translocase</keyword>
<keyword id="KW-0813">Transport</keyword>
<evidence type="ECO:0000255" key="1">
    <source>
        <dbReference type="HAMAP-Rule" id="MF_01346"/>
    </source>
</evidence>
<accession>Q3BAQ7</accession>
<reference key="1">
    <citation type="journal article" date="2006" name="Mol. Biol. Evol.">
        <title>The chloroplast genome of Phalaenopsis aphrodite (Orchidaceae): comparative analysis of evolutionary rate with that of grasses and its phylogenetic implications.</title>
        <authorList>
            <person name="Chang C.-C."/>
            <person name="Lin H.-C."/>
            <person name="Lin I.-P."/>
            <person name="Chow T.-Y."/>
            <person name="Chen H.-H."/>
            <person name="Chen W.-H."/>
            <person name="Cheng C.-H."/>
            <person name="Lin C.-Y."/>
            <person name="Liu S.-M."/>
            <person name="Chang C.-C."/>
            <person name="Chaw S.-M."/>
        </authorList>
    </citation>
    <scope>NUCLEOTIDE SEQUENCE [LARGE SCALE GENOMIC DNA]</scope>
    <source>
        <strain>cv. Taisugar TS-97</strain>
    </source>
</reference>
<organism>
    <name type="scientific">Phalaenopsis aphrodite subsp. formosana</name>
    <name type="common">Moth orchid</name>
    <dbReference type="NCBI Taxonomy" id="308872"/>
    <lineage>
        <taxon>Eukaryota</taxon>
        <taxon>Viridiplantae</taxon>
        <taxon>Streptophyta</taxon>
        <taxon>Embryophyta</taxon>
        <taxon>Tracheophyta</taxon>
        <taxon>Spermatophyta</taxon>
        <taxon>Magnoliopsida</taxon>
        <taxon>Liliopsida</taxon>
        <taxon>Asparagales</taxon>
        <taxon>Orchidaceae</taxon>
        <taxon>Epidendroideae</taxon>
        <taxon>Vandeae</taxon>
        <taxon>Aeridinae</taxon>
        <taxon>Phalaenopsis</taxon>
    </lineage>
</organism>
<protein>
    <recommendedName>
        <fullName evidence="1">ATP synthase subunit alpha, chloroplastic</fullName>
        <ecNumber evidence="1">7.1.2.2</ecNumber>
    </recommendedName>
    <alternativeName>
        <fullName evidence="1">ATP synthase F1 sector subunit alpha</fullName>
    </alternativeName>
    <alternativeName>
        <fullName evidence="1">F-ATPase subunit alpha</fullName>
    </alternativeName>
</protein>
<gene>
    <name evidence="1" type="primary">atpA</name>
</gene>
<geneLocation type="chloroplast"/>
<feature type="chain" id="PRO_0000238432" description="ATP synthase subunit alpha, chloroplastic">
    <location>
        <begin position="1"/>
        <end position="507"/>
    </location>
</feature>
<feature type="binding site" evidence="1">
    <location>
        <begin position="170"/>
        <end position="177"/>
    </location>
    <ligand>
        <name>ATP</name>
        <dbReference type="ChEBI" id="CHEBI:30616"/>
    </ligand>
</feature>
<feature type="site" description="Required for activity" evidence="1">
    <location>
        <position position="363"/>
    </location>
</feature>
<dbReference type="EC" id="7.1.2.2" evidence="1"/>
<dbReference type="EMBL" id="AY916449">
    <property type="protein sequence ID" value="AAW82488.1"/>
    <property type="molecule type" value="Genomic_DNA"/>
</dbReference>
<dbReference type="RefSeq" id="YP_358561.1">
    <property type="nucleotide sequence ID" value="NC_007499.1"/>
</dbReference>
<dbReference type="SMR" id="Q3BAQ7"/>
<dbReference type="GeneID" id="3741663"/>
<dbReference type="GO" id="GO:0009535">
    <property type="term" value="C:chloroplast thylakoid membrane"/>
    <property type="evidence" value="ECO:0007669"/>
    <property type="project" value="UniProtKB-SubCell"/>
</dbReference>
<dbReference type="GO" id="GO:0045259">
    <property type="term" value="C:proton-transporting ATP synthase complex"/>
    <property type="evidence" value="ECO:0007669"/>
    <property type="project" value="UniProtKB-KW"/>
</dbReference>
<dbReference type="GO" id="GO:0043531">
    <property type="term" value="F:ADP binding"/>
    <property type="evidence" value="ECO:0007669"/>
    <property type="project" value="TreeGrafter"/>
</dbReference>
<dbReference type="GO" id="GO:0005524">
    <property type="term" value="F:ATP binding"/>
    <property type="evidence" value="ECO:0007669"/>
    <property type="project" value="UniProtKB-UniRule"/>
</dbReference>
<dbReference type="GO" id="GO:0046933">
    <property type="term" value="F:proton-transporting ATP synthase activity, rotational mechanism"/>
    <property type="evidence" value="ECO:0007669"/>
    <property type="project" value="UniProtKB-UniRule"/>
</dbReference>
<dbReference type="CDD" id="cd18113">
    <property type="entry name" value="ATP-synt_F1_alpha_C"/>
    <property type="match status" value="1"/>
</dbReference>
<dbReference type="CDD" id="cd18116">
    <property type="entry name" value="ATP-synt_F1_alpha_N"/>
    <property type="match status" value="1"/>
</dbReference>
<dbReference type="CDD" id="cd01132">
    <property type="entry name" value="F1-ATPase_alpha_CD"/>
    <property type="match status" value="1"/>
</dbReference>
<dbReference type="FunFam" id="1.20.150.20:FF:000001">
    <property type="entry name" value="ATP synthase subunit alpha"/>
    <property type="match status" value="1"/>
</dbReference>
<dbReference type="FunFam" id="2.40.30.20:FF:000001">
    <property type="entry name" value="ATP synthase subunit alpha"/>
    <property type="match status" value="1"/>
</dbReference>
<dbReference type="FunFam" id="3.40.50.300:FF:000002">
    <property type="entry name" value="ATP synthase subunit alpha"/>
    <property type="match status" value="1"/>
</dbReference>
<dbReference type="Gene3D" id="2.40.30.20">
    <property type="match status" value="1"/>
</dbReference>
<dbReference type="Gene3D" id="1.20.150.20">
    <property type="entry name" value="ATP synthase alpha/beta chain, C-terminal domain"/>
    <property type="match status" value="1"/>
</dbReference>
<dbReference type="Gene3D" id="3.40.50.300">
    <property type="entry name" value="P-loop containing nucleotide triphosphate hydrolases"/>
    <property type="match status" value="1"/>
</dbReference>
<dbReference type="HAMAP" id="MF_01346">
    <property type="entry name" value="ATP_synth_alpha_bact"/>
    <property type="match status" value="1"/>
</dbReference>
<dbReference type="InterPro" id="IPR023366">
    <property type="entry name" value="ATP_synth_asu-like_sf"/>
</dbReference>
<dbReference type="InterPro" id="IPR000793">
    <property type="entry name" value="ATP_synth_asu_C"/>
</dbReference>
<dbReference type="InterPro" id="IPR038376">
    <property type="entry name" value="ATP_synth_asu_C_sf"/>
</dbReference>
<dbReference type="InterPro" id="IPR033732">
    <property type="entry name" value="ATP_synth_F1_a_nt-bd_dom"/>
</dbReference>
<dbReference type="InterPro" id="IPR005294">
    <property type="entry name" value="ATP_synth_F1_asu"/>
</dbReference>
<dbReference type="InterPro" id="IPR020003">
    <property type="entry name" value="ATPase_a/bsu_AS"/>
</dbReference>
<dbReference type="InterPro" id="IPR004100">
    <property type="entry name" value="ATPase_F1/V1/A1_a/bsu_N"/>
</dbReference>
<dbReference type="InterPro" id="IPR036121">
    <property type="entry name" value="ATPase_F1/V1/A1_a/bsu_N_sf"/>
</dbReference>
<dbReference type="InterPro" id="IPR000194">
    <property type="entry name" value="ATPase_F1/V1/A1_a/bsu_nucl-bd"/>
</dbReference>
<dbReference type="InterPro" id="IPR027417">
    <property type="entry name" value="P-loop_NTPase"/>
</dbReference>
<dbReference type="NCBIfam" id="TIGR00962">
    <property type="entry name" value="atpA"/>
    <property type="match status" value="1"/>
</dbReference>
<dbReference type="NCBIfam" id="NF009884">
    <property type="entry name" value="PRK13343.1"/>
    <property type="match status" value="1"/>
</dbReference>
<dbReference type="PANTHER" id="PTHR48082">
    <property type="entry name" value="ATP SYNTHASE SUBUNIT ALPHA, MITOCHONDRIAL"/>
    <property type="match status" value="1"/>
</dbReference>
<dbReference type="PANTHER" id="PTHR48082:SF2">
    <property type="entry name" value="ATP SYNTHASE SUBUNIT ALPHA, MITOCHONDRIAL"/>
    <property type="match status" value="1"/>
</dbReference>
<dbReference type="Pfam" id="PF00006">
    <property type="entry name" value="ATP-synt_ab"/>
    <property type="match status" value="1"/>
</dbReference>
<dbReference type="Pfam" id="PF00306">
    <property type="entry name" value="ATP-synt_ab_C"/>
    <property type="match status" value="1"/>
</dbReference>
<dbReference type="Pfam" id="PF02874">
    <property type="entry name" value="ATP-synt_ab_N"/>
    <property type="match status" value="1"/>
</dbReference>
<dbReference type="PIRSF" id="PIRSF039088">
    <property type="entry name" value="F_ATPase_subunit_alpha"/>
    <property type="match status" value="1"/>
</dbReference>
<dbReference type="SUPFAM" id="SSF47917">
    <property type="entry name" value="C-terminal domain of alpha and beta subunits of F1 ATP synthase"/>
    <property type="match status" value="1"/>
</dbReference>
<dbReference type="SUPFAM" id="SSF50615">
    <property type="entry name" value="N-terminal domain of alpha and beta subunits of F1 ATP synthase"/>
    <property type="match status" value="1"/>
</dbReference>
<dbReference type="SUPFAM" id="SSF52540">
    <property type="entry name" value="P-loop containing nucleoside triphosphate hydrolases"/>
    <property type="match status" value="1"/>
</dbReference>
<dbReference type="PROSITE" id="PS00152">
    <property type="entry name" value="ATPASE_ALPHA_BETA"/>
    <property type="match status" value="1"/>
</dbReference>
<comment type="function">
    <text evidence="1">Produces ATP from ADP in the presence of a proton gradient across the membrane. The alpha chain is a regulatory subunit.</text>
</comment>
<comment type="catalytic activity">
    <reaction evidence="1">
        <text>ATP + H2O + 4 H(+)(in) = ADP + phosphate + 5 H(+)(out)</text>
        <dbReference type="Rhea" id="RHEA:57720"/>
        <dbReference type="ChEBI" id="CHEBI:15377"/>
        <dbReference type="ChEBI" id="CHEBI:15378"/>
        <dbReference type="ChEBI" id="CHEBI:30616"/>
        <dbReference type="ChEBI" id="CHEBI:43474"/>
        <dbReference type="ChEBI" id="CHEBI:456216"/>
        <dbReference type="EC" id="7.1.2.2"/>
    </reaction>
</comment>
<comment type="subunit">
    <text evidence="1">F-type ATPases have 2 components, CF(1) - the catalytic core - and CF(0) - the membrane proton channel. CF(1) has five subunits: alpha(3), beta(3), gamma(1), delta(1), epsilon(1). CF(0) has four main subunits: a, b, b' and c.</text>
</comment>
<comment type="subcellular location">
    <subcellularLocation>
        <location evidence="1">Plastid</location>
        <location evidence="1">Chloroplast thylakoid membrane</location>
        <topology evidence="1">Peripheral membrane protein</topology>
    </subcellularLocation>
</comment>
<comment type="similarity">
    <text evidence="1">Belongs to the ATPase alpha/beta chains family.</text>
</comment>
<sequence length="507" mass="55235">MGTLRADEISNIIRERIEQYNREVKIVNTGTVLQVGDGIARIHGLDEVMAGELIEFEEGTIGIALNLESNNVGVVLMGDGLMIKEGSSVKATGRIAQIPVSEAFLGRVINALAKPIDGRGEISSSESRLIESPAPGIISRRSVYEPLQTGLIAIDSMIPIGRGQRELIIGDRQTGKTAVATDTILNQKGQNVICVYVAIGQKASSVAQVVTTFQEGGAMEYTIVVAETADSPATLQYLAPYTGAALAEYFMYRERHTSIIYDDLSKQAQAYRQMSLLLRRPPGREAYPGDVFYLHSRLLERAAKLSSRLGEGSMTALPIVETQSGDVSAYIPTNVISITDGQIFLSADLFNAGIRPAINVGISVSRVGSAAQIKAMKQVAGKSKLELAQFAELEAFAQFASDLDKATQNQLARGQRLRELLKQSQSDPLAVEDQIATIYTGTNGYLDALEIGQVKKFLVGLRTYLTKKKPKFQEILSSTKIFTEEAETLLREAIQEQIELFLLQEQT</sequence>
<name>ATPA_PHAAO</name>
<proteinExistence type="inferred from homology"/>